<dbReference type="EC" id="2.4.1.250" evidence="1"/>
<dbReference type="EMBL" id="CT573213">
    <property type="protein sequence ID" value="CAJ59616.1"/>
    <property type="molecule type" value="Genomic_DNA"/>
</dbReference>
<dbReference type="SMR" id="Q0RS49"/>
<dbReference type="STRING" id="326424.FRAAL0950"/>
<dbReference type="CAZy" id="GT4">
    <property type="family name" value="Glycosyltransferase Family 4"/>
</dbReference>
<dbReference type="KEGG" id="fal:FRAAL0950"/>
<dbReference type="eggNOG" id="COG0438">
    <property type="taxonomic scope" value="Bacteria"/>
</dbReference>
<dbReference type="HOGENOM" id="CLU_009583_2_3_11"/>
<dbReference type="Proteomes" id="UP000000657">
    <property type="component" value="Chromosome"/>
</dbReference>
<dbReference type="GO" id="GO:0008375">
    <property type="term" value="F:acetylglucosaminyltransferase activity"/>
    <property type="evidence" value="ECO:0007669"/>
    <property type="project" value="UniProtKB-UniRule"/>
</dbReference>
<dbReference type="GO" id="GO:0102710">
    <property type="term" value="F:D-inositol-3-phosphate glycosyltransferase activity"/>
    <property type="evidence" value="ECO:0007669"/>
    <property type="project" value="UniProtKB-EC"/>
</dbReference>
<dbReference type="GO" id="GO:0000287">
    <property type="term" value="F:magnesium ion binding"/>
    <property type="evidence" value="ECO:0007669"/>
    <property type="project" value="UniProtKB-UniRule"/>
</dbReference>
<dbReference type="GO" id="GO:0010125">
    <property type="term" value="P:mycothiol biosynthetic process"/>
    <property type="evidence" value="ECO:0007669"/>
    <property type="project" value="UniProtKB-UniRule"/>
</dbReference>
<dbReference type="Gene3D" id="3.40.50.2000">
    <property type="entry name" value="Glycogen Phosphorylase B"/>
    <property type="match status" value="2"/>
</dbReference>
<dbReference type="HAMAP" id="MF_01695">
    <property type="entry name" value="MshA"/>
    <property type="match status" value="1"/>
</dbReference>
<dbReference type="InterPro" id="IPR001296">
    <property type="entry name" value="Glyco_trans_1"/>
</dbReference>
<dbReference type="InterPro" id="IPR028098">
    <property type="entry name" value="Glyco_trans_4-like_N"/>
</dbReference>
<dbReference type="InterPro" id="IPR050194">
    <property type="entry name" value="Glycosyltransferase_grp1"/>
</dbReference>
<dbReference type="InterPro" id="IPR017814">
    <property type="entry name" value="Mycothiol_biosynthesis_MshA"/>
</dbReference>
<dbReference type="NCBIfam" id="TIGR03449">
    <property type="entry name" value="mycothiol_MshA"/>
    <property type="match status" value="1"/>
</dbReference>
<dbReference type="PANTHER" id="PTHR45947">
    <property type="entry name" value="SULFOQUINOVOSYL TRANSFERASE SQD2"/>
    <property type="match status" value="1"/>
</dbReference>
<dbReference type="PANTHER" id="PTHR45947:SF3">
    <property type="entry name" value="SULFOQUINOVOSYL TRANSFERASE SQD2"/>
    <property type="match status" value="1"/>
</dbReference>
<dbReference type="Pfam" id="PF13579">
    <property type="entry name" value="Glyco_trans_4_4"/>
    <property type="match status" value="1"/>
</dbReference>
<dbReference type="Pfam" id="PF00534">
    <property type="entry name" value="Glycos_transf_1"/>
    <property type="match status" value="1"/>
</dbReference>
<dbReference type="SUPFAM" id="SSF53756">
    <property type="entry name" value="UDP-Glycosyltransferase/glycogen phosphorylase"/>
    <property type="match status" value="1"/>
</dbReference>
<evidence type="ECO:0000255" key="1">
    <source>
        <dbReference type="HAMAP-Rule" id="MF_01695"/>
    </source>
</evidence>
<reference key="1">
    <citation type="journal article" date="2007" name="Genome Res.">
        <title>Genome characteristics of facultatively symbiotic Frankia sp. strains reflect host range and host plant biogeography.</title>
        <authorList>
            <person name="Normand P."/>
            <person name="Lapierre P."/>
            <person name="Tisa L.S."/>
            <person name="Gogarten J.P."/>
            <person name="Alloisio N."/>
            <person name="Bagnarol E."/>
            <person name="Bassi C.A."/>
            <person name="Berry A.M."/>
            <person name="Bickhart D.M."/>
            <person name="Choisne N."/>
            <person name="Couloux A."/>
            <person name="Cournoyer B."/>
            <person name="Cruveiller S."/>
            <person name="Daubin V."/>
            <person name="Demange N."/>
            <person name="Francino M.P."/>
            <person name="Goltsman E."/>
            <person name="Huang Y."/>
            <person name="Kopp O.R."/>
            <person name="Labarre L."/>
            <person name="Lapidus A."/>
            <person name="Lavire C."/>
            <person name="Marechal J."/>
            <person name="Martinez M."/>
            <person name="Mastronunzio J.E."/>
            <person name="Mullin B.C."/>
            <person name="Niemann J."/>
            <person name="Pujic P."/>
            <person name="Rawnsley T."/>
            <person name="Rouy Z."/>
            <person name="Schenowitz C."/>
            <person name="Sellstedt A."/>
            <person name="Tavares F."/>
            <person name="Tomkins J.P."/>
            <person name="Vallenet D."/>
            <person name="Valverde C."/>
            <person name="Wall L.G."/>
            <person name="Wang Y."/>
            <person name="Medigue C."/>
            <person name="Benson D.R."/>
        </authorList>
    </citation>
    <scope>NUCLEOTIDE SEQUENCE [LARGE SCALE GENOMIC DNA]</scope>
    <source>
        <strain>DSM 45986 / CECT 9034 / ACN14a</strain>
    </source>
</reference>
<feature type="chain" id="PRO_0000400122" description="D-inositol 3-phosphate glycosyltransferase">
    <location>
        <begin position="1"/>
        <end position="407"/>
    </location>
</feature>
<feature type="binding site" evidence="1">
    <location>
        <position position="2"/>
    </location>
    <ligand>
        <name>1D-myo-inositol 3-phosphate</name>
        <dbReference type="ChEBI" id="CHEBI:58401"/>
    </ligand>
</feature>
<feature type="binding site" evidence="1">
    <location>
        <begin position="8"/>
        <end position="9"/>
    </location>
    <ligand>
        <name>UDP-N-acetyl-alpha-D-glucosamine</name>
        <dbReference type="ChEBI" id="CHEBI:57705"/>
    </ligand>
</feature>
<feature type="binding site" evidence="1">
    <location>
        <begin position="13"/>
        <end position="18"/>
    </location>
    <ligand>
        <name>1D-myo-inositol 3-phosphate</name>
        <dbReference type="ChEBI" id="CHEBI:58401"/>
    </ligand>
</feature>
<feature type="binding site" evidence="1">
    <location>
        <position position="16"/>
    </location>
    <ligand>
        <name>UDP-N-acetyl-alpha-D-glucosamine</name>
        <dbReference type="ChEBI" id="CHEBI:57705"/>
    </ligand>
</feature>
<feature type="binding site" evidence="1">
    <location>
        <position position="71"/>
    </location>
    <ligand>
        <name>1D-myo-inositol 3-phosphate</name>
        <dbReference type="ChEBI" id="CHEBI:58401"/>
    </ligand>
</feature>
<feature type="binding site" evidence="1">
    <location>
        <position position="104"/>
    </location>
    <ligand>
        <name>1D-myo-inositol 3-phosphate</name>
        <dbReference type="ChEBI" id="CHEBI:58401"/>
    </ligand>
</feature>
<feature type="binding site" evidence="1">
    <location>
        <position position="128"/>
    </location>
    <ligand>
        <name>1D-myo-inositol 3-phosphate</name>
        <dbReference type="ChEBI" id="CHEBI:58401"/>
    </ligand>
</feature>
<feature type="binding site" evidence="1">
    <location>
        <position position="148"/>
    </location>
    <ligand>
        <name>1D-myo-inositol 3-phosphate</name>
        <dbReference type="ChEBI" id="CHEBI:58401"/>
    </ligand>
</feature>
<feature type="binding site" evidence="1">
    <location>
        <position position="222"/>
    </location>
    <ligand>
        <name>UDP-N-acetyl-alpha-D-glucosamine</name>
        <dbReference type="ChEBI" id="CHEBI:57705"/>
    </ligand>
</feature>
<feature type="binding site" evidence="1">
    <location>
        <position position="227"/>
    </location>
    <ligand>
        <name>UDP-N-acetyl-alpha-D-glucosamine</name>
        <dbReference type="ChEBI" id="CHEBI:57705"/>
    </ligand>
</feature>
<feature type="binding site" evidence="1">
    <location>
        <position position="297"/>
    </location>
    <ligand>
        <name>Mg(2+)</name>
        <dbReference type="ChEBI" id="CHEBI:18420"/>
    </ligand>
</feature>
<feature type="binding site" evidence="1">
    <location>
        <position position="298"/>
    </location>
    <ligand>
        <name>Mg(2+)</name>
        <dbReference type="ChEBI" id="CHEBI:18420"/>
    </ligand>
</feature>
<feature type="binding site" evidence="1">
    <location>
        <position position="300"/>
    </location>
    <ligand>
        <name>Mg(2+)</name>
        <dbReference type="ChEBI" id="CHEBI:18420"/>
    </ligand>
</feature>
<feature type="binding site" evidence="1">
    <location>
        <position position="310"/>
    </location>
    <ligand>
        <name>UDP-N-acetyl-alpha-D-glucosamine</name>
        <dbReference type="ChEBI" id="CHEBI:57705"/>
    </ligand>
</feature>
<feature type="binding site" evidence="1">
    <location>
        <position position="318"/>
    </location>
    <ligand>
        <name>UDP-N-acetyl-alpha-D-glucosamine</name>
        <dbReference type="ChEBI" id="CHEBI:57705"/>
    </ligand>
</feature>
<feature type="binding site" evidence="1">
    <location>
        <position position="324"/>
    </location>
    <ligand>
        <name>Mg(2+)</name>
        <dbReference type="ChEBI" id="CHEBI:18420"/>
    </ligand>
</feature>
<name>MSHA_FRAAA</name>
<gene>
    <name evidence="1" type="primary">mshA</name>
    <name type="ordered locus">FRAAL0950</name>
</gene>
<comment type="function">
    <text evidence="1">Catalyzes the transfer of a N-acetyl-glucosamine moiety to 1D-myo-inositol 3-phosphate to produce 1D-myo-inositol 2-acetamido-2-deoxy-glucopyranoside 3-phosphate in the mycothiol biosynthesis pathway.</text>
</comment>
<comment type="catalytic activity">
    <reaction evidence="1">
        <text>1D-myo-inositol 3-phosphate + UDP-N-acetyl-alpha-D-glucosamine = 1D-myo-inositol 2-acetamido-2-deoxy-alpha-D-glucopyranoside 3-phosphate + UDP + H(+)</text>
        <dbReference type="Rhea" id="RHEA:26188"/>
        <dbReference type="ChEBI" id="CHEBI:15378"/>
        <dbReference type="ChEBI" id="CHEBI:57705"/>
        <dbReference type="ChEBI" id="CHEBI:58223"/>
        <dbReference type="ChEBI" id="CHEBI:58401"/>
        <dbReference type="ChEBI" id="CHEBI:58892"/>
        <dbReference type="EC" id="2.4.1.250"/>
    </reaction>
</comment>
<comment type="subunit">
    <text evidence="1">Homodimer.</text>
</comment>
<comment type="similarity">
    <text evidence="1">Belongs to the glycosyltransferase group 1 family. MshA subfamily.</text>
</comment>
<organism>
    <name type="scientific">Frankia alni (strain DSM 45986 / CECT 9034 / ACN14a)</name>
    <dbReference type="NCBI Taxonomy" id="326424"/>
    <lineage>
        <taxon>Bacteria</taxon>
        <taxon>Bacillati</taxon>
        <taxon>Actinomycetota</taxon>
        <taxon>Actinomycetes</taxon>
        <taxon>Frankiales</taxon>
        <taxon>Frankiaceae</taxon>
        <taxon>Frankia</taxon>
    </lineage>
</organism>
<keyword id="KW-0328">Glycosyltransferase</keyword>
<keyword id="KW-0460">Magnesium</keyword>
<keyword id="KW-0479">Metal-binding</keyword>
<keyword id="KW-1185">Reference proteome</keyword>
<keyword id="KW-0808">Transferase</keyword>
<sequence length="407" mass="43127">MHTSPMEQPGTGDAGGLNVYVVELSRQLAALGVEVEVFTRAVSSKLPTSAELAPGVTVRHVDAGPFEEIHREDLPAWLCAFTADVLRAEAGHEPGYFDVIHSHYWLSGQVALAVARRWGVPFVHTSHTLAKIKNGALAVGDRPEPPGRLLGEQEVIAGSTRLIASTADERGHLIDLYDADPDRVDVVAPGVDLETFRPGDPAQSRARLGLDRDGDLLLFVGRIQPLKAPDLLLHAAAELLRRDPTRRSRLTVAVVGGPSGSGLEQPDALVKLAADLGISDLVRFQPPAPQHELAHWYRAATAVVVPSHSESFGLVALEAQACGTPVVAAAVGGLRTAVADGVSGLLVAGRDPARYADTLDRLLRQPHWRSRLAAGAVGRAAGFGWSATARGVLRSYRHALSPAAVAV</sequence>
<proteinExistence type="inferred from homology"/>
<accession>Q0RS49</accession>
<protein>
    <recommendedName>
        <fullName>D-inositol 3-phosphate glycosyltransferase</fullName>
        <ecNumber evidence="1">2.4.1.250</ecNumber>
    </recommendedName>
    <alternativeName>
        <fullName evidence="1">N-acetylglucosamine-inositol-phosphate N-acetylglucosaminyltransferase</fullName>
        <shortName evidence="1">GlcNAc-Ins-P N-acetylglucosaminyltransferase</shortName>
    </alternativeName>
</protein>